<organism>
    <name type="scientific">Thioalkalivibrio sulfidiphilus (strain HL-EbGR7)</name>
    <dbReference type="NCBI Taxonomy" id="396588"/>
    <lineage>
        <taxon>Bacteria</taxon>
        <taxon>Pseudomonadati</taxon>
        <taxon>Pseudomonadota</taxon>
        <taxon>Gammaproteobacteria</taxon>
        <taxon>Chromatiales</taxon>
        <taxon>Ectothiorhodospiraceae</taxon>
        <taxon>Thioalkalivibrio</taxon>
    </lineage>
</organism>
<keyword id="KW-0413">Isomerase</keyword>
<keyword id="KW-0663">Pyridoxal phosphate</keyword>
<keyword id="KW-1185">Reference proteome</keyword>
<gene>
    <name type="primary">alr</name>
    <name type="ordered locus">Tgr7_0928</name>
</gene>
<accession>B8GNS7</accession>
<protein>
    <recommendedName>
        <fullName evidence="1">Alanine racemase</fullName>
        <ecNumber evidence="1">5.1.1.1</ecNumber>
    </recommendedName>
</protein>
<comment type="function">
    <text evidence="1">Catalyzes the interconversion of L-alanine and D-alanine. May also act on other amino acids.</text>
</comment>
<comment type="catalytic activity">
    <reaction evidence="1">
        <text>L-alanine = D-alanine</text>
        <dbReference type="Rhea" id="RHEA:20249"/>
        <dbReference type="ChEBI" id="CHEBI:57416"/>
        <dbReference type="ChEBI" id="CHEBI:57972"/>
        <dbReference type="EC" id="5.1.1.1"/>
    </reaction>
</comment>
<comment type="cofactor">
    <cofactor evidence="1">
        <name>pyridoxal 5'-phosphate</name>
        <dbReference type="ChEBI" id="CHEBI:597326"/>
    </cofactor>
</comment>
<comment type="pathway">
    <text evidence="1">Amino-acid biosynthesis; D-alanine biosynthesis; D-alanine from L-alanine: step 1/1.</text>
</comment>
<comment type="similarity">
    <text evidence="1">Belongs to the alanine racemase family.</text>
</comment>
<reference key="1">
    <citation type="journal article" date="2011" name="Stand. Genomic Sci.">
        <title>Complete genome sequence of 'Thioalkalivibrio sulfidophilus' HL-EbGr7.</title>
        <authorList>
            <person name="Muyzer G."/>
            <person name="Sorokin D.Y."/>
            <person name="Mavromatis K."/>
            <person name="Lapidus A."/>
            <person name="Clum A."/>
            <person name="Ivanova N."/>
            <person name="Pati A."/>
            <person name="d'Haeseleer P."/>
            <person name="Woyke T."/>
            <person name="Kyrpides N.C."/>
        </authorList>
    </citation>
    <scope>NUCLEOTIDE SEQUENCE [LARGE SCALE GENOMIC DNA]</scope>
    <source>
        <strain>HL-EbGR7</strain>
    </source>
</reference>
<name>ALR_THISH</name>
<dbReference type="EC" id="5.1.1.1" evidence="1"/>
<dbReference type="EMBL" id="CP001339">
    <property type="protein sequence ID" value="ACL72016.1"/>
    <property type="molecule type" value="Genomic_DNA"/>
</dbReference>
<dbReference type="RefSeq" id="WP_012637501.1">
    <property type="nucleotide sequence ID" value="NC_011901.1"/>
</dbReference>
<dbReference type="SMR" id="B8GNS7"/>
<dbReference type="STRING" id="396588.Tgr7_0928"/>
<dbReference type="KEGG" id="tgr:Tgr7_0928"/>
<dbReference type="eggNOG" id="COG0787">
    <property type="taxonomic scope" value="Bacteria"/>
</dbReference>
<dbReference type="HOGENOM" id="CLU_028393_1_0_6"/>
<dbReference type="OrthoDB" id="9813814at2"/>
<dbReference type="UniPathway" id="UPA00042">
    <property type="reaction ID" value="UER00497"/>
</dbReference>
<dbReference type="Proteomes" id="UP000002383">
    <property type="component" value="Chromosome"/>
</dbReference>
<dbReference type="GO" id="GO:0005829">
    <property type="term" value="C:cytosol"/>
    <property type="evidence" value="ECO:0007669"/>
    <property type="project" value="TreeGrafter"/>
</dbReference>
<dbReference type="GO" id="GO:0008784">
    <property type="term" value="F:alanine racemase activity"/>
    <property type="evidence" value="ECO:0007669"/>
    <property type="project" value="UniProtKB-UniRule"/>
</dbReference>
<dbReference type="GO" id="GO:0030170">
    <property type="term" value="F:pyridoxal phosphate binding"/>
    <property type="evidence" value="ECO:0007669"/>
    <property type="project" value="UniProtKB-UniRule"/>
</dbReference>
<dbReference type="GO" id="GO:0030632">
    <property type="term" value="P:D-alanine biosynthetic process"/>
    <property type="evidence" value="ECO:0007669"/>
    <property type="project" value="UniProtKB-UniRule"/>
</dbReference>
<dbReference type="CDD" id="cd06827">
    <property type="entry name" value="PLPDE_III_AR_proteobact"/>
    <property type="match status" value="1"/>
</dbReference>
<dbReference type="FunFam" id="3.20.20.10:FF:000002">
    <property type="entry name" value="Alanine racemase"/>
    <property type="match status" value="1"/>
</dbReference>
<dbReference type="Gene3D" id="3.20.20.10">
    <property type="entry name" value="Alanine racemase"/>
    <property type="match status" value="1"/>
</dbReference>
<dbReference type="Gene3D" id="2.40.37.10">
    <property type="entry name" value="Lyase, Ornithine Decarboxylase, Chain A, domain 1"/>
    <property type="match status" value="1"/>
</dbReference>
<dbReference type="HAMAP" id="MF_01201">
    <property type="entry name" value="Ala_racemase"/>
    <property type="match status" value="1"/>
</dbReference>
<dbReference type="InterPro" id="IPR000821">
    <property type="entry name" value="Ala_racemase"/>
</dbReference>
<dbReference type="InterPro" id="IPR009006">
    <property type="entry name" value="Ala_racemase/Decarboxylase_C"/>
</dbReference>
<dbReference type="InterPro" id="IPR011079">
    <property type="entry name" value="Ala_racemase_C"/>
</dbReference>
<dbReference type="InterPro" id="IPR001608">
    <property type="entry name" value="Ala_racemase_N"/>
</dbReference>
<dbReference type="InterPro" id="IPR020622">
    <property type="entry name" value="Ala_racemase_pyridoxalP-BS"/>
</dbReference>
<dbReference type="InterPro" id="IPR029066">
    <property type="entry name" value="PLP-binding_barrel"/>
</dbReference>
<dbReference type="NCBIfam" id="TIGR00492">
    <property type="entry name" value="alr"/>
    <property type="match status" value="1"/>
</dbReference>
<dbReference type="PANTHER" id="PTHR30511">
    <property type="entry name" value="ALANINE RACEMASE"/>
    <property type="match status" value="1"/>
</dbReference>
<dbReference type="PANTHER" id="PTHR30511:SF0">
    <property type="entry name" value="ALANINE RACEMASE, CATABOLIC-RELATED"/>
    <property type="match status" value="1"/>
</dbReference>
<dbReference type="Pfam" id="PF00842">
    <property type="entry name" value="Ala_racemase_C"/>
    <property type="match status" value="1"/>
</dbReference>
<dbReference type="Pfam" id="PF01168">
    <property type="entry name" value="Ala_racemase_N"/>
    <property type="match status" value="1"/>
</dbReference>
<dbReference type="PRINTS" id="PR00992">
    <property type="entry name" value="ALARACEMASE"/>
</dbReference>
<dbReference type="SMART" id="SM01005">
    <property type="entry name" value="Ala_racemase_C"/>
    <property type="match status" value="1"/>
</dbReference>
<dbReference type="SUPFAM" id="SSF50621">
    <property type="entry name" value="Alanine racemase C-terminal domain-like"/>
    <property type="match status" value="1"/>
</dbReference>
<dbReference type="SUPFAM" id="SSF51419">
    <property type="entry name" value="PLP-binding barrel"/>
    <property type="match status" value="1"/>
</dbReference>
<dbReference type="PROSITE" id="PS00395">
    <property type="entry name" value="ALANINE_RACEMASE"/>
    <property type="match status" value="1"/>
</dbReference>
<evidence type="ECO:0000255" key="1">
    <source>
        <dbReference type="HAMAP-Rule" id="MF_01201"/>
    </source>
</evidence>
<feature type="chain" id="PRO_1000164634" description="Alanine racemase">
    <location>
        <begin position="1"/>
        <end position="361"/>
    </location>
</feature>
<feature type="active site" description="Proton acceptor; specific for D-alanine" evidence="1">
    <location>
        <position position="35"/>
    </location>
</feature>
<feature type="active site" description="Proton acceptor; specific for L-alanine" evidence="1">
    <location>
        <position position="257"/>
    </location>
</feature>
<feature type="binding site" evidence="1">
    <location>
        <position position="132"/>
    </location>
    <ligand>
        <name>substrate</name>
    </ligand>
</feature>
<feature type="binding site" evidence="1">
    <location>
        <position position="305"/>
    </location>
    <ligand>
        <name>substrate</name>
    </ligand>
</feature>
<feature type="modified residue" description="N6-(pyridoxal phosphate)lysine" evidence="1">
    <location>
        <position position="35"/>
    </location>
</feature>
<proteinExistence type="inferred from homology"/>
<sequence>MRRAARARIDLNALRHNLRTARRAAPRSRVMAVIKAEAYGHGMLAVARALAAQADAFAISCIDEARVLREAGVTLPLVVLQGFRDAAQLIEVARLGDVQPVIHSTGQLDVLESAALPAPLRVWLKLDTGMHRLGLPPGEAAVLQNRIAALPQVAGVPGLMTHLACADEPERPETGIQLQVFDAATADLPGERSIANSAAVLRTPAACRDWVRPGIMLYGASPLAGETAQSLDLQPVMTVSAPVVAVKRLAAGDAVGYGGGYVCQSPRTMAVVAMGYGDGYPRHAPSGTPVRVHGRRCALMGRVSMDMLCVDVTEVPGVAPGDDVTLWGEGLPVDEIAAAAGTISYELLCSVGGRLRLEYVG</sequence>